<proteinExistence type="inferred from homology"/>
<organism>
    <name type="scientific">Yarrowia lipolytica (strain CLIB 122 / E 150)</name>
    <name type="common">Yeast</name>
    <name type="synonym">Candida lipolytica</name>
    <dbReference type="NCBI Taxonomy" id="284591"/>
    <lineage>
        <taxon>Eukaryota</taxon>
        <taxon>Fungi</taxon>
        <taxon>Dikarya</taxon>
        <taxon>Ascomycota</taxon>
        <taxon>Saccharomycotina</taxon>
        <taxon>Dipodascomycetes</taxon>
        <taxon>Dipodascales</taxon>
        <taxon>Dipodascales incertae sedis</taxon>
        <taxon>Yarrowia</taxon>
    </lineage>
</organism>
<evidence type="ECO:0000250" key="1"/>
<evidence type="ECO:0000255" key="2"/>
<evidence type="ECO:0000305" key="3"/>
<reference key="1">
    <citation type="journal article" date="2004" name="Nature">
        <title>Genome evolution in yeasts.</title>
        <authorList>
            <person name="Dujon B."/>
            <person name="Sherman D."/>
            <person name="Fischer G."/>
            <person name="Durrens P."/>
            <person name="Casaregola S."/>
            <person name="Lafontaine I."/>
            <person name="de Montigny J."/>
            <person name="Marck C."/>
            <person name="Neuveglise C."/>
            <person name="Talla E."/>
            <person name="Goffard N."/>
            <person name="Frangeul L."/>
            <person name="Aigle M."/>
            <person name="Anthouard V."/>
            <person name="Babour A."/>
            <person name="Barbe V."/>
            <person name="Barnay S."/>
            <person name="Blanchin S."/>
            <person name="Beckerich J.-M."/>
            <person name="Beyne E."/>
            <person name="Bleykasten C."/>
            <person name="Boisrame A."/>
            <person name="Boyer J."/>
            <person name="Cattolico L."/>
            <person name="Confanioleri F."/>
            <person name="de Daruvar A."/>
            <person name="Despons L."/>
            <person name="Fabre E."/>
            <person name="Fairhead C."/>
            <person name="Ferry-Dumazet H."/>
            <person name="Groppi A."/>
            <person name="Hantraye F."/>
            <person name="Hennequin C."/>
            <person name="Jauniaux N."/>
            <person name="Joyet P."/>
            <person name="Kachouri R."/>
            <person name="Kerrest A."/>
            <person name="Koszul R."/>
            <person name="Lemaire M."/>
            <person name="Lesur I."/>
            <person name="Ma L."/>
            <person name="Muller H."/>
            <person name="Nicaud J.-M."/>
            <person name="Nikolski M."/>
            <person name="Oztas S."/>
            <person name="Ozier-Kalogeropoulos O."/>
            <person name="Pellenz S."/>
            <person name="Potier S."/>
            <person name="Richard G.-F."/>
            <person name="Straub M.-L."/>
            <person name="Suleau A."/>
            <person name="Swennen D."/>
            <person name="Tekaia F."/>
            <person name="Wesolowski-Louvel M."/>
            <person name="Westhof E."/>
            <person name="Wirth B."/>
            <person name="Zeniou-Meyer M."/>
            <person name="Zivanovic Y."/>
            <person name="Bolotin-Fukuhara M."/>
            <person name="Thierry A."/>
            <person name="Bouchier C."/>
            <person name="Caudron B."/>
            <person name="Scarpelli C."/>
            <person name="Gaillardin C."/>
            <person name="Weissenbach J."/>
            <person name="Wincker P."/>
            <person name="Souciet J.-L."/>
        </authorList>
    </citation>
    <scope>NUCLEOTIDE SEQUENCE [LARGE SCALE GENOMIC DNA]</scope>
    <source>
        <strain>CLIB 122 / E 150</strain>
    </source>
</reference>
<accession>Q6C0U0</accession>
<sequence>MEKSITNSPVLSILSYCAASILMTVTNKYVLSGTSFNLNLALLAVQSIVCLTAISIGKSFGLCKFRSFNADEAKKWFPIALLLVVMIYTSSKALQFLSIPVYTIFKNLTIILIAYGEVLWFGGSVTSMALASFVLMVLSSVIAAWSDISGAIAVSGSATTTVTALNIGYFWMMSNCFASAAFVLYMRKRIKLTNFGDFDTTFYNNLLSIPVLLIASLLFEDWSPANLAVNFPPESRNLIFFSMVVSGLMSIGISYCSAWCVRVTSSTTYSMVGALNKLPLALSGIVFFGTPATFSSVSAIFVGFVAGIVYAVAQIQKKKAEAALPK</sequence>
<keyword id="KW-0968">Cytoplasmic vesicle</keyword>
<keyword id="KW-0256">Endoplasmic reticulum</keyword>
<keyword id="KW-0333">Golgi apparatus</keyword>
<keyword id="KW-0472">Membrane</keyword>
<keyword id="KW-1185">Reference proteome</keyword>
<keyword id="KW-0762">Sugar transport</keyword>
<keyword id="KW-0812">Transmembrane</keyword>
<keyword id="KW-1133">Transmembrane helix</keyword>
<keyword id="KW-0813">Transport</keyword>
<protein>
    <recommendedName>
        <fullName>GDP-mannose transporter</fullName>
        <shortName>GMT</shortName>
    </recommendedName>
</protein>
<name>GMT_YARLI</name>
<comment type="function">
    <text evidence="1">Involved in the import of GDP-mannose from the cytoplasm into the Golgi lumen.</text>
</comment>
<comment type="subunit">
    <text evidence="1">Homooligomer.</text>
</comment>
<comment type="subcellular location">
    <subcellularLocation>
        <location evidence="1">Golgi apparatus membrane</location>
        <topology evidence="1">Multi-pass membrane protein</topology>
    </subcellularLocation>
    <subcellularLocation>
        <location evidence="1">Cytoplasmic vesicle membrane</location>
        <topology evidence="1">Multi-pass membrane protein</topology>
    </subcellularLocation>
    <subcellularLocation>
        <location evidence="1">Endoplasmic reticulum membrane</location>
        <topology evidence="1">Multi-pass membrane protein</topology>
    </subcellularLocation>
</comment>
<comment type="similarity">
    <text evidence="3">Belongs to the TPT transporter family. SLC35D subfamily.</text>
</comment>
<feature type="chain" id="PRO_0000333540" description="GDP-mannose transporter">
    <location>
        <begin position="1"/>
        <end position="326"/>
    </location>
</feature>
<feature type="topological domain" description="Cytoplasmic" evidence="1">
    <location>
        <begin position="1"/>
        <end position="4"/>
    </location>
</feature>
<feature type="transmembrane region" description="Helical" evidence="2">
    <location>
        <begin position="5"/>
        <end position="25"/>
    </location>
</feature>
<feature type="topological domain" description="Lumenal" evidence="1">
    <location>
        <begin position="26"/>
        <end position="35"/>
    </location>
</feature>
<feature type="transmembrane region" description="Helical" evidence="2">
    <location>
        <begin position="36"/>
        <end position="56"/>
    </location>
</feature>
<feature type="topological domain" description="Cytoplasmic" evidence="1">
    <location>
        <begin position="57"/>
        <end position="74"/>
    </location>
</feature>
<feature type="transmembrane region" description="Helical" evidence="2">
    <location>
        <begin position="75"/>
        <end position="97"/>
    </location>
</feature>
<feature type="topological domain" description="Lumenal" evidence="1">
    <location>
        <begin position="98"/>
        <end position="100"/>
    </location>
</feature>
<feature type="transmembrane region" description="Helical" evidence="2">
    <location>
        <begin position="101"/>
        <end position="123"/>
    </location>
</feature>
<feature type="topological domain" description="Cytoplasmic" evidence="1">
    <location>
        <begin position="124"/>
        <end position="129"/>
    </location>
</feature>
<feature type="transmembrane region" description="Helical" evidence="2">
    <location>
        <begin position="130"/>
        <end position="152"/>
    </location>
</feature>
<feature type="topological domain" description="Lumenal" evidence="1">
    <location>
        <begin position="153"/>
        <end position="163"/>
    </location>
</feature>
<feature type="transmembrane region" description="Helical" evidence="2">
    <location>
        <begin position="164"/>
        <end position="184"/>
    </location>
</feature>
<feature type="topological domain" description="Cytoplasmic" evidence="1">
    <location>
        <begin position="185"/>
        <end position="208"/>
    </location>
</feature>
<feature type="transmembrane region" description="Helical" evidence="2">
    <location>
        <begin position="209"/>
        <end position="229"/>
    </location>
</feature>
<feature type="topological domain" description="Lumenal" evidence="1">
    <location>
        <begin position="230"/>
        <end position="237"/>
    </location>
</feature>
<feature type="transmembrane region" description="Helical" evidence="2">
    <location>
        <begin position="238"/>
        <end position="258"/>
    </location>
</feature>
<feature type="topological domain" description="Cytoplasmic" evidence="1">
    <location>
        <begin position="259"/>
        <end position="268"/>
    </location>
</feature>
<feature type="transmembrane region" description="Helical" evidence="2">
    <location>
        <begin position="269"/>
        <end position="289"/>
    </location>
</feature>
<feature type="topological domain" description="Lumenal" evidence="1">
    <location>
        <begin position="290"/>
        <end position="291"/>
    </location>
</feature>
<feature type="transmembrane region" description="Helical" evidence="2">
    <location>
        <begin position="292"/>
        <end position="312"/>
    </location>
</feature>
<feature type="topological domain" description="Cytoplasmic" evidence="1">
    <location>
        <begin position="313"/>
        <end position="326"/>
    </location>
</feature>
<dbReference type="EMBL" id="CR382132">
    <property type="protein sequence ID" value="CAG78533.1"/>
    <property type="molecule type" value="Genomic_DNA"/>
</dbReference>
<dbReference type="RefSeq" id="XP_505722.1">
    <property type="nucleotide sequence ID" value="XM_505722.1"/>
</dbReference>
<dbReference type="SMR" id="Q6C0U0"/>
<dbReference type="FunCoup" id="Q6C0U0">
    <property type="interactions" value="547"/>
</dbReference>
<dbReference type="STRING" id="284591.Q6C0U0"/>
<dbReference type="EnsemblFungi" id="CAG78533">
    <property type="protein sequence ID" value="CAG78533"/>
    <property type="gene ID" value="YALI0_F21791g"/>
</dbReference>
<dbReference type="KEGG" id="yli:2908843"/>
<dbReference type="VEuPathDB" id="FungiDB:YALI0_F21791g"/>
<dbReference type="HOGENOM" id="CLU_025360_1_2_1"/>
<dbReference type="InParanoid" id="Q6C0U0"/>
<dbReference type="OMA" id="VWMLINC"/>
<dbReference type="OrthoDB" id="62799at4891"/>
<dbReference type="Proteomes" id="UP000001300">
    <property type="component" value="Chromosome F"/>
</dbReference>
<dbReference type="GO" id="GO:0030659">
    <property type="term" value="C:cytoplasmic vesicle membrane"/>
    <property type="evidence" value="ECO:0007669"/>
    <property type="project" value="UniProtKB-SubCell"/>
</dbReference>
<dbReference type="GO" id="GO:0005789">
    <property type="term" value="C:endoplasmic reticulum membrane"/>
    <property type="evidence" value="ECO:0007669"/>
    <property type="project" value="UniProtKB-SubCell"/>
</dbReference>
<dbReference type="GO" id="GO:0005794">
    <property type="term" value="C:Golgi apparatus"/>
    <property type="evidence" value="ECO:0000318"/>
    <property type="project" value="GO_Central"/>
</dbReference>
<dbReference type="GO" id="GO:0000139">
    <property type="term" value="C:Golgi membrane"/>
    <property type="evidence" value="ECO:0007669"/>
    <property type="project" value="UniProtKB-SubCell"/>
</dbReference>
<dbReference type="GO" id="GO:0015297">
    <property type="term" value="F:antiporter activity"/>
    <property type="evidence" value="ECO:0000318"/>
    <property type="project" value="GO_Central"/>
</dbReference>
<dbReference type="GO" id="GO:0005458">
    <property type="term" value="F:GDP-mannose transmembrane transporter activity"/>
    <property type="evidence" value="ECO:0000318"/>
    <property type="project" value="GO_Central"/>
</dbReference>
<dbReference type="GO" id="GO:1990570">
    <property type="term" value="P:GDP-mannose transmembrane transport"/>
    <property type="evidence" value="ECO:0000318"/>
    <property type="project" value="GO_Central"/>
</dbReference>
<dbReference type="InterPro" id="IPR013657">
    <property type="entry name" value="SCL35B1-4/HUT1"/>
</dbReference>
<dbReference type="InterPro" id="IPR050186">
    <property type="entry name" value="TPT_transporter"/>
</dbReference>
<dbReference type="NCBIfam" id="TIGR00803">
    <property type="entry name" value="nst"/>
    <property type="match status" value="1"/>
</dbReference>
<dbReference type="PANTHER" id="PTHR11132">
    <property type="entry name" value="SOLUTE CARRIER FAMILY 35"/>
    <property type="match status" value="1"/>
</dbReference>
<dbReference type="Pfam" id="PF08449">
    <property type="entry name" value="UAA"/>
    <property type="match status" value="1"/>
</dbReference>
<dbReference type="SUPFAM" id="SSF103481">
    <property type="entry name" value="Multidrug resistance efflux transporter EmrE"/>
    <property type="match status" value="1"/>
</dbReference>
<gene>
    <name type="primary">VRG4</name>
    <name type="ordered locus">YALI0F21791g</name>
</gene>